<name>ARCX_MYCPN</name>
<accession>P75218</accession>
<evidence type="ECO:0000305" key="1"/>
<proteinExistence type="inferred from homology"/>
<comment type="similarity">
    <text evidence="1">Belongs to the arginine deiminase family.</text>
</comment>
<keyword id="KW-0378">Hydrolase</keyword>
<keyword id="KW-1185">Reference proteome</keyword>
<sequence length="438" mass="49442">MSKKQLVKTDGHNQLDQPNTKALQLKKKQFNSGVRVTSEISFLREVIAHHPGIETERVIDNQTFGSAMYLERAQKEHQLFIKILRQHGTKVHYLQDLLLEALSAADPNVRQDFIKNFLLESGIKSVSTFEACLNFFRSLDSLVDVIKVMFGGIKVSDVPPITPQRFADIHVSNSPFLIKPLSFSLYPHKFFNTLGTGVALFVTNDSELKRHSLVYEYIMRFHPRFDGVKLYTNRDFKNCLINSSDIIQISNEILLIGISHDTDVLGIESLARNLLSDHTNPIKQIIAINIHKFGAKTNLNKLIAMVDVDKFIIARKVLQATEIFELTATAQRDVDGLAQIKFKPLKFNFGEIIEAIIDKQPRFVIIGGGDEVAERKELLDCGMGVLNLSPGEIVVFDRNHYTNNLLNELGLIIHKIPASELSRGPSGPLEMVCSLWRE</sequence>
<protein>
    <recommendedName>
        <fullName>Arginine deiminase-like protein</fullName>
    </recommendedName>
</protein>
<organism>
    <name type="scientific">Mycoplasma pneumoniae (strain ATCC 29342 / M129 / Subtype 1)</name>
    <name type="common">Mycoplasmoides pneumoniae</name>
    <dbReference type="NCBI Taxonomy" id="272634"/>
    <lineage>
        <taxon>Bacteria</taxon>
        <taxon>Bacillati</taxon>
        <taxon>Mycoplasmatota</taxon>
        <taxon>Mycoplasmoidales</taxon>
        <taxon>Mycoplasmoidaceae</taxon>
        <taxon>Mycoplasmoides</taxon>
    </lineage>
</organism>
<reference key="1">
    <citation type="journal article" date="1996" name="Nucleic Acids Res.">
        <title>Complete sequence analysis of the genome of the bacterium Mycoplasma pneumoniae.</title>
        <authorList>
            <person name="Himmelreich R."/>
            <person name="Hilbert H."/>
            <person name="Plagens H."/>
            <person name="Pirkl E."/>
            <person name="Li B.-C."/>
            <person name="Herrmann R."/>
        </authorList>
    </citation>
    <scope>NUCLEOTIDE SEQUENCE [LARGE SCALE GENOMIC DNA]</scope>
    <source>
        <strain>ATCC 29342 / M129 / Subtype 1</strain>
    </source>
</reference>
<dbReference type="EMBL" id="U00089">
    <property type="protein sequence ID" value="AAB95930.1"/>
    <property type="molecule type" value="Genomic_DNA"/>
</dbReference>
<dbReference type="PIR" id="S73608">
    <property type="entry name" value="S73608"/>
</dbReference>
<dbReference type="RefSeq" id="NP_110249.1">
    <property type="nucleotide sequence ID" value="NC_000912.1"/>
</dbReference>
<dbReference type="RefSeq" id="WP_010874917.1">
    <property type="nucleotide sequence ID" value="NC_000912.1"/>
</dbReference>
<dbReference type="SMR" id="P75218"/>
<dbReference type="STRING" id="272634.MPN_560"/>
<dbReference type="DNASU" id="877192"/>
<dbReference type="EnsemblBacteria" id="AAB95930">
    <property type="protein sequence ID" value="AAB95930"/>
    <property type="gene ID" value="MPN_560"/>
</dbReference>
<dbReference type="KEGG" id="mpn:MPN_560"/>
<dbReference type="PATRIC" id="fig|272634.6.peg.622"/>
<dbReference type="HOGENOM" id="CLU_052662_0_1_14"/>
<dbReference type="OrthoDB" id="9807502at2"/>
<dbReference type="BioCyc" id="MetaCyc:MONOMER-507"/>
<dbReference type="BioCyc" id="MPNE272634:G1GJ3-919-MONOMER"/>
<dbReference type="Proteomes" id="UP000000808">
    <property type="component" value="Chromosome"/>
</dbReference>
<dbReference type="GO" id="GO:0016990">
    <property type="term" value="F:arginine deiminase activity"/>
    <property type="evidence" value="ECO:0007669"/>
    <property type="project" value="InterPro"/>
</dbReference>
<dbReference type="GO" id="GO:0019546">
    <property type="term" value="P:arginine deiminase pathway"/>
    <property type="evidence" value="ECO:0007669"/>
    <property type="project" value="TreeGrafter"/>
</dbReference>
<dbReference type="Gene3D" id="1.10.3930.10">
    <property type="entry name" value="Arginine deiminase"/>
    <property type="match status" value="1"/>
</dbReference>
<dbReference type="Gene3D" id="3.75.10.10">
    <property type="entry name" value="L-arginine/glycine Amidinotransferase, Chain A"/>
    <property type="match status" value="1"/>
</dbReference>
<dbReference type="InterPro" id="IPR003876">
    <property type="entry name" value="Arg_deiminase"/>
</dbReference>
<dbReference type="PANTHER" id="PTHR47271">
    <property type="entry name" value="ARGININE DEIMINASE"/>
    <property type="match status" value="1"/>
</dbReference>
<dbReference type="PANTHER" id="PTHR47271:SF2">
    <property type="entry name" value="ARGININE DEIMINASE"/>
    <property type="match status" value="1"/>
</dbReference>
<dbReference type="Pfam" id="PF02274">
    <property type="entry name" value="ADI"/>
    <property type="match status" value="1"/>
</dbReference>
<dbReference type="PIRSF" id="PIRSF006356">
    <property type="entry name" value="Arg_deiminase"/>
    <property type="match status" value="1"/>
</dbReference>
<dbReference type="PRINTS" id="PR01466">
    <property type="entry name" value="ARGDEIMINASE"/>
</dbReference>
<dbReference type="SUPFAM" id="SSF55909">
    <property type="entry name" value="Pentein"/>
    <property type="match status" value="1"/>
</dbReference>
<feature type="chain" id="PRO_0000182257" description="Arginine deiminase-like protein">
    <location>
        <begin position="1"/>
        <end position="438"/>
    </location>
</feature>
<gene>
    <name type="ordered locus">MPN_560</name>
    <name type="ORF">MP282</name>
</gene>